<name>CLPP1_BACLD</name>
<gene>
    <name evidence="1" type="primary">clpP1</name>
    <name type="ordered locus">BLi03710</name>
    <name type="ordered locus">BL03605</name>
</gene>
<accession>Q65EI5</accession>
<accession>Q62Q02</accession>
<sequence>MNLIPTVIEQTNRGERAYDIYSRLLKDRIIMLGSAIDDNVANSIVSQLLFLEAEDPEKDISIYINSPGGSITAGMAIYDTMQFIKPQVSTICTGMAASMGAFLLAAGEKGKRYALPNSEVMIHQPLGGAQGQATEIEIAAKRILSLRDKLNKILAERTGQPLEVIERDTDRDNFKTAEEAKEYGLIDKVLTRNIDAQK</sequence>
<evidence type="ECO:0000255" key="1">
    <source>
        <dbReference type="HAMAP-Rule" id="MF_00444"/>
    </source>
</evidence>
<keyword id="KW-0963">Cytoplasm</keyword>
<keyword id="KW-0378">Hydrolase</keyword>
<keyword id="KW-0645">Protease</keyword>
<keyword id="KW-1185">Reference proteome</keyword>
<keyword id="KW-0720">Serine protease</keyword>
<organism>
    <name type="scientific">Bacillus licheniformis (strain ATCC 14580 / DSM 13 / JCM 2505 / CCUG 7422 / NBRC 12200 / NCIMB 9375 / NCTC 10341 / NRRL NRS-1264 / Gibson 46)</name>
    <dbReference type="NCBI Taxonomy" id="279010"/>
    <lineage>
        <taxon>Bacteria</taxon>
        <taxon>Bacillati</taxon>
        <taxon>Bacillota</taxon>
        <taxon>Bacilli</taxon>
        <taxon>Bacillales</taxon>
        <taxon>Bacillaceae</taxon>
        <taxon>Bacillus</taxon>
    </lineage>
</organism>
<feature type="chain" id="PRO_0000179497" description="ATP-dependent Clp protease proteolytic subunit 1">
    <location>
        <begin position="1"/>
        <end position="198"/>
    </location>
</feature>
<feature type="active site" description="Nucleophile" evidence="1">
    <location>
        <position position="98"/>
    </location>
</feature>
<feature type="active site" evidence="1">
    <location>
        <position position="123"/>
    </location>
</feature>
<dbReference type="EC" id="3.4.21.92" evidence="1"/>
<dbReference type="EMBL" id="AE017333">
    <property type="protein sequence ID" value="AAU42529.1"/>
    <property type="molecule type" value="Genomic_DNA"/>
</dbReference>
<dbReference type="EMBL" id="CP000002">
    <property type="protein sequence ID" value="AAU25159.1"/>
    <property type="molecule type" value="Genomic_DNA"/>
</dbReference>
<dbReference type="SMR" id="Q65EI5"/>
<dbReference type="STRING" id="279010.BL03605"/>
<dbReference type="MEROPS" id="S14.001"/>
<dbReference type="KEGG" id="bld:BLi03710"/>
<dbReference type="KEGG" id="bli:BL03605"/>
<dbReference type="eggNOG" id="COG0740">
    <property type="taxonomic scope" value="Bacteria"/>
</dbReference>
<dbReference type="HOGENOM" id="CLU_058707_3_2_9"/>
<dbReference type="Proteomes" id="UP000000606">
    <property type="component" value="Chromosome"/>
</dbReference>
<dbReference type="GO" id="GO:0005737">
    <property type="term" value="C:cytoplasm"/>
    <property type="evidence" value="ECO:0007669"/>
    <property type="project" value="UniProtKB-SubCell"/>
</dbReference>
<dbReference type="GO" id="GO:0009368">
    <property type="term" value="C:endopeptidase Clp complex"/>
    <property type="evidence" value="ECO:0007669"/>
    <property type="project" value="TreeGrafter"/>
</dbReference>
<dbReference type="GO" id="GO:0004176">
    <property type="term" value="F:ATP-dependent peptidase activity"/>
    <property type="evidence" value="ECO:0007669"/>
    <property type="project" value="InterPro"/>
</dbReference>
<dbReference type="GO" id="GO:0051117">
    <property type="term" value="F:ATPase binding"/>
    <property type="evidence" value="ECO:0007669"/>
    <property type="project" value="TreeGrafter"/>
</dbReference>
<dbReference type="GO" id="GO:0004252">
    <property type="term" value="F:serine-type endopeptidase activity"/>
    <property type="evidence" value="ECO:0007669"/>
    <property type="project" value="UniProtKB-UniRule"/>
</dbReference>
<dbReference type="GO" id="GO:0006515">
    <property type="term" value="P:protein quality control for misfolded or incompletely synthesized proteins"/>
    <property type="evidence" value="ECO:0007669"/>
    <property type="project" value="TreeGrafter"/>
</dbReference>
<dbReference type="CDD" id="cd07017">
    <property type="entry name" value="S14_ClpP_2"/>
    <property type="match status" value="1"/>
</dbReference>
<dbReference type="FunFam" id="3.90.226.10:FF:000001">
    <property type="entry name" value="ATP-dependent Clp protease proteolytic subunit"/>
    <property type="match status" value="1"/>
</dbReference>
<dbReference type="Gene3D" id="3.90.226.10">
    <property type="entry name" value="2-enoyl-CoA Hydratase, Chain A, domain 1"/>
    <property type="match status" value="1"/>
</dbReference>
<dbReference type="HAMAP" id="MF_00444">
    <property type="entry name" value="ClpP"/>
    <property type="match status" value="1"/>
</dbReference>
<dbReference type="InterPro" id="IPR001907">
    <property type="entry name" value="ClpP"/>
</dbReference>
<dbReference type="InterPro" id="IPR029045">
    <property type="entry name" value="ClpP/crotonase-like_dom_sf"/>
</dbReference>
<dbReference type="InterPro" id="IPR023562">
    <property type="entry name" value="ClpP/TepA"/>
</dbReference>
<dbReference type="InterPro" id="IPR033135">
    <property type="entry name" value="ClpP_His_AS"/>
</dbReference>
<dbReference type="NCBIfam" id="TIGR00493">
    <property type="entry name" value="clpP"/>
    <property type="match status" value="1"/>
</dbReference>
<dbReference type="NCBIfam" id="NF001368">
    <property type="entry name" value="PRK00277.1"/>
    <property type="match status" value="1"/>
</dbReference>
<dbReference type="NCBIfam" id="NF009205">
    <property type="entry name" value="PRK12553.1"/>
    <property type="match status" value="1"/>
</dbReference>
<dbReference type="PANTHER" id="PTHR10381">
    <property type="entry name" value="ATP-DEPENDENT CLP PROTEASE PROTEOLYTIC SUBUNIT"/>
    <property type="match status" value="1"/>
</dbReference>
<dbReference type="PANTHER" id="PTHR10381:SF70">
    <property type="entry name" value="ATP-DEPENDENT CLP PROTEASE PROTEOLYTIC SUBUNIT"/>
    <property type="match status" value="1"/>
</dbReference>
<dbReference type="Pfam" id="PF00574">
    <property type="entry name" value="CLP_protease"/>
    <property type="match status" value="1"/>
</dbReference>
<dbReference type="PRINTS" id="PR00127">
    <property type="entry name" value="CLPPROTEASEP"/>
</dbReference>
<dbReference type="SUPFAM" id="SSF52096">
    <property type="entry name" value="ClpP/crotonase"/>
    <property type="match status" value="1"/>
</dbReference>
<dbReference type="PROSITE" id="PS00382">
    <property type="entry name" value="CLP_PROTEASE_HIS"/>
    <property type="match status" value="1"/>
</dbReference>
<reference key="1">
    <citation type="journal article" date="2004" name="J. Mol. Microbiol. Biotechnol.">
        <title>The complete genome sequence of Bacillus licheniformis DSM13, an organism with great industrial potential.</title>
        <authorList>
            <person name="Veith B."/>
            <person name="Herzberg C."/>
            <person name="Steckel S."/>
            <person name="Feesche J."/>
            <person name="Maurer K.H."/>
            <person name="Ehrenreich P."/>
            <person name="Baeumer S."/>
            <person name="Henne A."/>
            <person name="Liesegang H."/>
            <person name="Merkl R."/>
            <person name="Ehrenreich A."/>
            <person name="Gottschalk G."/>
        </authorList>
    </citation>
    <scope>NUCLEOTIDE SEQUENCE [LARGE SCALE GENOMIC DNA]</scope>
    <source>
        <strain>ATCC 14580 / DSM 13 / JCM 2505 / CCUG 7422 / NBRC 12200 / NCIMB 9375 / NCTC 10341 / NRRL NRS-1264 / Gibson 46</strain>
    </source>
</reference>
<reference key="2">
    <citation type="journal article" date="2004" name="Genome Biol.">
        <title>Complete genome sequence of the industrial bacterium Bacillus licheniformis and comparisons with closely related Bacillus species.</title>
        <authorList>
            <person name="Rey M.W."/>
            <person name="Ramaiya P."/>
            <person name="Nelson B.A."/>
            <person name="Brody-Karpin S.D."/>
            <person name="Zaretsky E.J."/>
            <person name="Tang M."/>
            <person name="Lopez de Leon A."/>
            <person name="Xiang H."/>
            <person name="Gusti V."/>
            <person name="Clausen I.G."/>
            <person name="Olsen P.B."/>
            <person name="Rasmussen M.D."/>
            <person name="Andersen J.T."/>
            <person name="Joergensen P.L."/>
            <person name="Larsen T.S."/>
            <person name="Sorokin A."/>
            <person name="Bolotin A."/>
            <person name="Lapidus A."/>
            <person name="Galleron N."/>
            <person name="Ehrlich S.D."/>
            <person name="Berka R.M."/>
        </authorList>
    </citation>
    <scope>NUCLEOTIDE SEQUENCE [LARGE SCALE GENOMIC DNA]</scope>
    <source>
        <strain>ATCC 14580 / DSM 13 / JCM 2505 / CCUG 7422 / NBRC 12200 / NCIMB 9375 / NCTC 10341 / NRRL NRS-1264 / Gibson 46</strain>
    </source>
</reference>
<protein>
    <recommendedName>
        <fullName evidence="1">ATP-dependent Clp protease proteolytic subunit 1</fullName>
        <ecNumber evidence="1">3.4.21.92</ecNumber>
    </recommendedName>
    <alternativeName>
        <fullName evidence="1">Endopeptidase Clp 1</fullName>
    </alternativeName>
</protein>
<proteinExistence type="inferred from homology"/>
<comment type="function">
    <text evidence="1">Cleaves peptides in various proteins in a process that requires ATP hydrolysis. Has a chymotrypsin-like activity. Plays a major role in the degradation of misfolded proteins. ClpXP1 is involved in the complete degradation of the Site-2 clipped anti-sigma-W factor RsiW. This results in the release of SigW and the transcription activation of the genes under the control of the sigma-W factor (By similarity).</text>
</comment>
<comment type="catalytic activity">
    <reaction evidence="1">
        <text>Hydrolysis of proteins to small peptides in the presence of ATP and magnesium. alpha-casein is the usual test substrate. In the absence of ATP, only oligopeptides shorter than five residues are hydrolyzed (such as succinyl-Leu-Tyr-|-NHMec, and Leu-Tyr-Leu-|-Tyr-Trp, in which cleavage of the -Tyr-|-Leu- and -Tyr-|-Trp bonds also occurs).</text>
        <dbReference type="EC" id="3.4.21.92"/>
    </reaction>
</comment>
<comment type="subunit">
    <text evidence="1">Fourteen ClpP subunits assemble into 2 heptameric rings which stack back to back to give a disk-like structure with a central cavity, resembling the structure of eukaryotic proteasomes.</text>
</comment>
<comment type="subcellular location">
    <subcellularLocation>
        <location evidence="1">Cytoplasm</location>
    </subcellularLocation>
</comment>
<comment type="similarity">
    <text evidence="1">Belongs to the peptidase S14 family.</text>
</comment>